<organism>
    <name type="scientific">Staphylococcus aureus</name>
    <dbReference type="NCBI Taxonomy" id="1280"/>
    <lineage>
        <taxon>Bacteria</taxon>
        <taxon>Bacillati</taxon>
        <taxon>Bacillota</taxon>
        <taxon>Bacilli</taxon>
        <taxon>Bacillales</taxon>
        <taxon>Staphylococcaceae</taxon>
        <taxon>Staphylococcus</taxon>
    </lineage>
</organism>
<feature type="chain" id="PRO_0000183255" description="Protein CapI">
    <location>
        <begin position="1"/>
        <end position="334"/>
    </location>
</feature>
<feature type="active site" description="Proton acceptor" evidence="1">
    <location>
        <position position="151"/>
    </location>
</feature>
<feature type="binding site" evidence="1">
    <location>
        <position position="126"/>
    </location>
    <ligand>
        <name>substrate</name>
    </ligand>
</feature>
<keyword id="KW-0972">Capsule biogenesis/degradation</keyword>
<keyword id="KW-0270">Exopolysaccharide synthesis</keyword>
<keyword id="KW-0456">Lyase</keyword>
<keyword id="KW-0520">NAD</keyword>
<reference key="1">
    <citation type="journal article" date="1994" name="J. Bacteriol.">
        <title>Sequence analysis and molecular characterization of genes required for the biosynthesis of type 1 capsular polysaccharide in Staphylococcus aureus.</title>
        <authorList>
            <person name="Lin W.S."/>
            <person name="Cunneen T."/>
            <person name="Lee C.Y."/>
        </authorList>
    </citation>
    <scope>NUCLEOTIDE SEQUENCE [GENOMIC DNA]</scope>
    <source>
        <strain>ATCC 49951 / M / NCTC 10649</strain>
    </source>
</reference>
<name>CAPI_STAAU</name>
<sequence length="334" mass="37931">MKILITGTAGFIGSHLAKKLIKQGHYVIGVDSINDYYSVSLKEDRLKSIGKENFTFNKVKLENYDDLSKVFVDEQPEVVVNLAAQAGVRYSIENPRTYIDSNIVGFMNILECSRHFNIQNLIYASSSSVYGANTSKPFSTSDNIDHPLSLYAATKKSNELMAHTYSHLYNLPTTGLRFFTVYGPWGRPDMALFKFTKAIVNDQAIDVYNHGNMMRDFTYVDDIVEAISRLVKKPASPNKEWSGADPDPGSSYAPYKVYNIGNNSPVRLMEFVEAIENKLGKEARKNYMDLQPGDVPETYANVDDLFRDIDFKPETTIQDGVNKFVDWYLEYYKK</sequence>
<protein>
    <recommendedName>
        <fullName>Protein CapI</fullName>
        <ecNumber>4.-.-.-</ecNumber>
    </recommendedName>
</protein>
<dbReference type="EC" id="4.-.-.-"/>
<dbReference type="EMBL" id="U10927">
    <property type="protein sequence ID" value="AAA64648.1"/>
    <property type="molecule type" value="Genomic_DNA"/>
</dbReference>
<dbReference type="SMR" id="P39858"/>
<dbReference type="UniPathway" id="UPA00934"/>
<dbReference type="GO" id="GO:0016829">
    <property type="term" value="F:lyase activity"/>
    <property type="evidence" value="ECO:0007669"/>
    <property type="project" value="UniProtKB-KW"/>
</dbReference>
<dbReference type="GO" id="GO:0045227">
    <property type="term" value="P:capsule polysaccharide biosynthetic process"/>
    <property type="evidence" value="ECO:0007669"/>
    <property type="project" value="UniProtKB-UniPathway"/>
</dbReference>
<dbReference type="CDD" id="cd05253">
    <property type="entry name" value="UDP_GE_SDE_e"/>
    <property type="match status" value="1"/>
</dbReference>
<dbReference type="Gene3D" id="3.40.50.720">
    <property type="entry name" value="NAD(P)-binding Rossmann-like Domain"/>
    <property type="match status" value="1"/>
</dbReference>
<dbReference type="InterPro" id="IPR001509">
    <property type="entry name" value="Epimerase_deHydtase"/>
</dbReference>
<dbReference type="InterPro" id="IPR036291">
    <property type="entry name" value="NAD(P)-bd_dom_sf"/>
</dbReference>
<dbReference type="PANTHER" id="PTHR43574">
    <property type="entry name" value="EPIMERASE-RELATED"/>
    <property type="match status" value="1"/>
</dbReference>
<dbReference type="Pfam" id="PF01370">
    <property type="entry name" value="Epimerase"/>
    <property type="match status" value="1"/>
</dbReference>
<dbReference type="PRINTS" id="PR01713">
    <property type="entry name" value="NUCEPIMERASE"/>
</dbReference>
<dbReference type="SUPFAM" id="SSF51735">
    <property type="entry name" value="NAD(P)-binding Rossmann-fold domains"/>
    <property type="match status" value="1"/>
</dbReference>
<evidence type="ECO:0000250" key="1"/>
<evidence type="ECO:0000305" key="2"/>
<proteinExistence type="inferred from homology"/>
<comment type="function">
    <text>Required for the biosynthesis of type 1 capsular polysaccharide.</text>
</comment>
<comment type="pathway">
    <text>Capsule biogenesis; capsule polysaccharide biosynthesis.</text>
</comment>
<comment type="similarity">
    <text evidence="2">Belongs to the NAD(P)-dependent epimerase/dehydratase family.</text>
</comment>
<gene>
    <name type="primary">capI</name>
</gene>
<accession>P39858</accession>